<organism>
    <name type="scientific">Shigella flexneri</name>
    <dbReference type="NCBI Taxonomy" id="623"/>
    <lineage>
        <taxon>Bacteria</taxon>
        <taxon>Pseudomonadati</taxon>
        <taxon>Pseudomonadota</taxon>
        <taxon>Gammaproteobacteria</taxon>
        <taxon>Enterobacterales</taxon>
        <taxon>Enterobacteriaceae</taxon>
        <taxon>Shigella</taxon>
    </lineage>
</organism>
<keyword id="KW-0997">Cell inner membrane</keyword>
<keyword id="KW-1003">Cell membrane</keyword>
<keyword id="KW-0378">Hydrolase</keyword>
<keyword id="KW-0442">Lipid degradation</keyword>
<keyword id="KW-0443">Lipid metabolism</keyword>
<keyword id="KW-0460">Magnesium</keyword>
<keyword id="KW-0472">Membrane</keyword>
<keyword id="KW-0479">Metal-binding</keyword>
<keyword id="KW-0595">Phospholipid degradation</keyword>
<keyword id="KW-1208">Phospholipid metabolism</keyword>
<keyword id="KW-1185">Reference proteome</keyword>
<keyword id="KW-0812">Transmembrane</keyword>
<keyword id="KW-1133">Transmembrane helix</keyword>
<comment type="function">
    <text evidence="1">Lipid phosphatase which dephosphorylates phosphatidylglycerophosphate (PGP) to phosphatidylglycerol (PG).</text>
</comment>
<comment type="catalytic activity">
    <reaction>
        <text>a 1,2-diacyl-sn-glycero-3-phospho-(1'-sn-glycero-3'-phosphate) + H2O = a 1,2-diacyl-sn-glycero-3-phospho-(1'-sn-glycerol) + phosphate</text>
        <dbReference type="Rhea" id="RHEA:33751"/>
        <dbReference type="ChEBI" id="CHEBI:15377"/>
        <dbReference type="ChEBI" id="CHEBI:43474"/>
        <dbReference type="ChEBI" id="CHEBI:60110"/>
        <dbReference type="ChEBI" id="CHEBI:64716"/>
        <dbReference type="EC" id="3.1.3.27"/>
    </reaction>
</comment>
<comment type="cofactor">
    <cofactor evidence="1">
        <name>Mg(2+)</name>
        <dbReference type="ChEBI" id="CHEBI:18420"/>
    </cofactor>
</comment>
<comment type="pathway">
    <text>Phospholipid metabolism; phosphatidylglycerol biosynthesis; phosphatidylglycerol from CDP-diacylglycerol: step 2/2.</text>
</comment>
<comment type="subcellular location">
    <subcellularLocation>
        <location evidence="1">Cell inner membrane</location>
        <topology evidence="1">Single-pass membrane protein</topology>
    </subcellularLocation>
</comment>
<comment type="sequence caution" evidence="3">
    <conflict type="erroneous initiation">
        <sequence resource="EMBL-CDS" id="AAN44104"/>
    </conflict>
    <text>Truncated N-terminus.</text>
</comment>
<comment type="sequence caution" evidence="3">
    <conflict type="erroneous initiation">
        <sequence resource="EMBL-CDS" id="AAP17928"/>
    </conflict>
    <text>Truncated N-terminus.</text>
</comment>
<feature type="chain" id="PRO_0000169248" description="Phosphatidylglycerophosphatase C">
    <location>
        <begin position="1"/>
        <end position="211"/>
    </location>
</feature>
<feature type="topological domain" description="Cytoplasmic" evidence="2">
    <location>
        <begin position="1"/>
        <end position="33"/>
    </location>
</feature>
<feature type="transmembrane region" description="Helical" evidence="2">
    <location>
        <begin position="34"/>
        <end position="54"/>
    </location>
</feature>
<feature type="topological domain" description="Periplasmic" evidence="2">
    <location>
        <begin position="55"/>
        <end position="211"/>
    </location>
</feature>
<protein>
    <recommendedName>
        <fullName>Phosphatidylglycerophosphatase C</fullName>
        <ecNumber>3.1.3.27</ecNumber>
    </recommendedName>
    <alternativeName>
        <fullName>Phosphatidylglycerolphosphate phosphatase C</fullName>
        <shortName>PGP phosphatase C</shortName>
    </alternativeName>
</protein>
<name>PGPC_SHIFL</name>
<proteinExistence type="inferred from homology"/>
<reference key="1">
    <citation type="journal article" date="2002" name="Nucleic Acids Res.">
        <title>Genome sequence of Shigella flexneri 2a: insights into pathogenicity through comparison with genomes of Escherichia coli K12 and O157.</title>
        <authorList>
            <person name="Jin Q."/>
            <person name="Yuan Z."/>
            <person name="Xu J."/>
            <person name="Wang Y."/>
            <person name="Shen Y."/>
            <person name="Lu W."/>
            <person name="Wang J."/>
            <person name="Liu H."/>
            <person name="Yang J."/>
            <person name="Yang F."/>
            <person name="Zhang X."/>
            <person name="Zhang J."/>
            <person name="Yang G."/>
            <person name="Wu H."/>
            <person name="Qu D."/>
            <person name="Dong J."/>
            <person name="Sun L."/>
            <person name="Xue Y."/>
            <person name="Zhao A."/>
            <person name="Gao Y."/>
            <person name="Zhu J."/>
            <person name="Kan B."/>
            <person name="Ding K."/>
            <person name="Chen S."/>
            <person name="Cheng H."/>
            <person name="Yao Z."/>
            <person name="He B."/>
            <person name="Chen R."/>
            <person name="Ma D."/>
            <person name="Qiang B."/>
            <person name="Wen Y."/>
            <person name="Hou Y."/>
            <person name="Yu J."/>
        </authorList>
    </citation>
    <scope>NUCLEOTIDE SEQUENCE [LARGE SCALE GENOMIC DNA]</scope>
    <source>
        <strain>301 / Serotype 2a</strain>
    </source>
</reference>
<reference key="2">
    <citation type="journal article" date="2003" name="Infect. Immun.">
        <title>Complete genome sequence and comparative genomics of Shigella flexneri serotype 2a strain 2457T.</title>
        <authorList>
            <person name="Wei J."/>
            <person name="Goldberg M.B."/>
            <person name="Burland V."/>
            <person name="Venkatesan M.M."/>
            <person name="Deng W."/>
            <person name="Fournier G."/>
            <person name="Mayhew G.F."/>
            <person name="Plunkett G. III"/>
            <person name="Rose D.J."/>
            <person name="Darling A."/>
            <person name="Mau B."/>
            <person name="Perna N.T."/>
            <person name="Payne S.M."/>
            <person name="Runyen-Janecky L.J."/>
            <person name="Zhou S."/>
            <person name="Schwartz D.C."/>
            <person name="Blattner F.R."/>
        </authorList>
    </citation>
    <scope>NUCLEOTIDE SEQUENCE [LARGE SCALE GENOMIC DNA]</scope>
    <source>
        <strain>ATCC 700930 / 2457T / Serotype 2a</strain>
    </source>
</reference>
<evidence type="ECO:0000250" key="1"/>
<evidence type="ECO:0000255" key="2"/>
<evidence type="ECO:0000305" key="3"/>
<dbReference type="EC" id="3.1.3.27"/>
<dbReference type="EMBL" id="AE005674">
    <property type="protein sequence ID" value="AAN44104.2"/>
    <property type="status" value="ALT_INIT"/>
    <property type="molecule type" value="Genomic_DNA"/>
</dbReference>
<dbReference type="EMBL" id="AE014073">
    <property type="protein sequence ID" value="AAP17928.1"/>
    <property type="status" value="ALT_INIT"/>
    <property type="molecule type" value="Genomic_DNA"/>
</dbReference>
<dbReference type="RefSeq" id="NP_708397.4">
    <property type="nucleotide sequence ID" value="NC_004337.2"/>
</dbReference>
<dbReference type="RefSeq" id="WP_000190655.1">
    <property type="nucleotide sequence ID" value="NZ_WPGW01000021.1"/>
</dbReference>
<dbReference type="SMR" id="P0AD43"/>
<dbReference type="STRING" id="198214.SF2607"/>
<dbReference type="PaxDb" id="198214-SF2607"/>
<dbReference type="GeneID" id="1025660"/>
<dbReference type="GeneID" id="93774575"/>
<dbReference type="KEGG" id="sfl:SF2607"/>
<dbReference type="KEGG" id="sfx:S2779"/>
<dbReference type="PATRIC" id="fig|198214.7.peg.3112"/>
<dbReference type="HOGENOM" id="CLU_112917_0_0_6"/>
<dbReference type="UniPathway" id="UPA00084">
    <property type="reaction ID" value="UER00504"/>
</dbReference>
<dbReference type="Proteomes" id="UP000001006">
    <property type="component" value="Chromosome"/>
</dbReference>
<dbReference type="Proteomes" id="UP000002673">
    <property type="component" value="Chromosome"/>
</dbReference>
<dbReference type="GO" id="GO:0005886">
    <property type="term" value="C:plasma membrane"/>
    <property type="evidence" value="ECO:0007669"/>
    <property type="project" value="UniProtKB-SubCell"/>
</dbReference>
<dbReference type="GO" id="GO:0046872">
    <property type="term" value="F:metal ion binding"/>
    <property type="evidence" value="ECO:0007669"/>
    <property type="project" value="UniProtKB-KW"/>
</dbReference>
<dbReference type="GO" id="GO:0008962">
    <property type="term" value="F:phosphatidylglycerophosphatase activity"/>
    <property type="evidence" value="ECO:0007669"/>
    <property type="project" value="UniProtKB-EC"/>
</dbReference>
<dbReference type="GO" id="GO:0006655">
    <property type="term" value="P:phosphatidylglycerol biosynthetic process"/>
    <property type="evidence" value="ECO:0007669"/>
    <property type="project" value="UniProtKB-UniPathway"/>
</dbReference>
<dbReference type="GO" id="GO:0009395">
    <property type="term" value="P:phospholipid catabolic process"/>
    <property type="evidence" value="ECO:0007669"/>
    <property type="project" value="UniProtKB-KW"/>
</dbReference>
<dbReference type="CDD" id="cd02612">
    <property type="entry name" value="HAD_PGPPase"/>
    <property type="match status" value="1"/>
</dbReference>
<dbReference type="FunFam" id="1.20.1440.100:FF:000002">
    <property type="entry name" value="HAD hydrolase, family IF"/>
    <property type="match status" value="1"/>
</dbReference>
<dbReference type="Gene3D" id="3.40.50.1000">
    <property type="entry name" value="HAD superfamily/HAD-like"/>
    <property type="match status" value="1"/>
</dbReference>
<dbReference type="Gene3D" id="1.20.1440.100">
    <property type="entry name" value="SG protein - dephosphorylation function"/>
    <property type="match status" value="1"/>
</dbReference>
<dbReference type="InterPro" id="IPR036412">
    <property type="entry name" value="HAD-like_sf"/>
</dbReference>
<dbReference type="InterPro" id="IPR006435">
    <property type="entry name" value="HAD-SF_hydro_IF_YfhB"/>
</dbReference>
<dbReference type="InterPro" id="IPR023214">
    <property type="entry name" value="HAD_sf"/>
</dbReference>
<dbReference type="NCBIfam" id="TIGR01545">
    <property type="entry name" value="YfhB_g-proteo"/>
    <property type="match status" value="1"/>
</dbReference>
<dbReference type="Pfam" id="PF12710">
    <property type="entry name" value="HAD"/>
    <property type="match status" value="1"/>
</dbReference>
<dbReference type="SUPFAM" id="SSF56784">
    <property type="entry name" value="HAD-like"/>
    <property type="match status" value="1"/>
</dbReference>
<gene>
    <name type="primary">pgpC</name>
    <name type="synonym">yfhB</name>
    <name type="ordered locus">SF2607</name>
    <name type="ordered locus">S2779</name>
</gene>
<sequence length="211" mass="24439">MATHERRVVFFDLDGTLHQQDMFGSFLRYLLRRQPLNALLVLPLLPIIAIALLIKGRAARWPMSLLLWGCTFGHSEARLQTLQADFVRWFRDNVTAFPLVQERLTTYLLSSDADIWLITGSPQPLVEAVYFDTPWLPRVNLIASQIQRGYGGWVLTMRCLGHEKVAQLERKIGTPLRLYSGYSDSNQDNPLLYFCQHRWRVTPRGELQQLE</sequence>
<accession>P0AD43</accession>
<accession>P30133</accession>